<dbReference type="EC" id="4.2.1.11" evidence="1"/>
<dbReference type="EMBL" id="CP000323">
    <property type="protein sequence ID" value="ABE75647.1"/>
    <property type="molecule type" value="Genomic_DNA"/>
</dbReference>
<dbReference type="RefSeq" id="WP_011514190.1">
    <property type="nucleotide sequence ID" value="NC_007969.1"/>
</dbReference>
<dbReference type="SMR" id="Q1Q9K6"/>
<dbReference type="STRING" id="335284.Pcryo_1870"/>
<dbReference type="KEGG" id="pcr:Pcryo_1870"/>
<dbReference type="eggNOG" id="COG0148">
    <property type="taxonomic scope" value="Bacteria"/>
</dbReference>
<dbReference type="HOGENOM" id="CLU_031223_2_1_6"/>
<dbReference type="UniPathway" id="UPA00109">
    <property type="reaction ID" value="UER00187"/>
</dbReference>
<dbReference type="Proteomes" id="UP000002425">
    <property type="component" value="Chromosome"/>
</dbReference>
<dbReference type="GO" id="GO:0009986">
    <property type="term" value="C:cell surface"/>
    <property type="evidence" value="ECO:0007669"/>
    <property type="project" value="UniProtKB-SubCell"/>
</dbReference>
<dbReference type="GO" id="GO:0005576">
    <property type="term" value="C:extracellular region"/>
    <property type="evidence" value="ECO:0007669"/>
    <property type="project" value="UniProtKB-SubCell"/>
</dbReference>
<dbReference type="GO" id="GO:0000015">
    <property type="term" value="C:phosphopyruvate hydratase complex"/>
    <property type="evidence" value="ECO:0007669"/>
    <property type="project" value="InterPro"/>
</dbReference>
<dbReference type="GO" id="GO:0000287">
    <property type="term" value="F:magnesium ion binding"/>
    <property type="evidence" value="ECO:0007669"/>
    <property type="project" value="UniProtKB-UniRule"/>
</dbReference>
<dbReference type="GO" id="GO:0004634">
    <property type="term" value="F:phosphopyruvate hydratase activity"/>
    <property type="evidence" value="ECO:0007669"/>
    <property type="project" value="UniProtKB-UniRule"/>
</dbReference>
<dbReference type="GO" id="GO:0006096">
    <property type="term" value="P:glycolytic process"/>
    <property type="evidence" value="ECO:0007669"/>
    <property type="project" value="UniProtKB-UniRule"/>
</dbReference>
<dbReference type="CDD" id="cd03313">
    <property type="entry name" value="enolase"/>
    <property type="match status" value="1"/>
</dbReference>
<dbReference type="FunFam" id="3.20.20.120:FF:000001">
    <property type="entry name" value="Enolase"/>
    <property type="match status" value="1"/>
</dbReference>
<dbReference type="FunFam" id="3.30.390.10:FF:000001">
    <property type="entry name" value="Enolase"/>
    <property type="match status" value="1"/>
</dbReference>
<dbReference type="Gene3D" id="3.20.20.120">
    <property type="entry name" value="Enolase-like C-terminal domain"/>
    <property type="match status" value="1"/>
</dbReference>
<dbReference type="Gene3D" id="3.30.390.10">
    <property type="entry name" value="Enolase-like, N-terminal domain"/>
    <property type="match status" value="1"/>
</dbReference>
<dbReference type="HAMAP" id="MF_00318">
    <property type="entry name" value="Enolase"/>
    <property type="match status" value="1"/>
</dbReference>
<dbReference type="InterPro" id="IPR000941">
    <property type="entry name" value="Enolase"/>
</dbReference>
<dbReference type="InterPro" id="IPR036849">
    <property type="entry name" value="Enolase-like_C_sf"/>
</dbReference>
<dbReference type="InterPro" id="IPR029017">
    <property type="entry name" value="Enolase-like_N"/>
</dbReference>
<dbReference type="InterPro" id="IPR020810">
    <property type="entry name" value="Enolase_C"/>
</dbReference>
<dbReference type="InterPro" id="IPR020809">
    <property type="entry name" value="Enolase_CS"/>
</dbReference>
<dbReference type="InterPro" id="IPR020811">
    <property type="entry name" value="Enolase_N"/>
</dbReference>
<dbReference type="NCBIfam" id="TIGR01060">
    <property type="entry name" value="eno"/>
    <property type="match status" value="1"/>
</dbReference>
<dbReference type="PANTHER" id="PTHR11902">
    <property type="entry name" value="ENOLASE"/>
    <property type="match status" value="1"/>
</dbReference>
<dbReference type="PANTHER" id="PTHR11902:SF1">
    <property type="entry name" value="ENOLASE"/>
    <property type="match status" value="1"/>
</dbReference>
<dbReference type="Pfam" id="PF00113">
    <property type="entry name" value="Enolase_C"/>
    <property type="match status" value="1"/>
</dbReference>
<dbReference type="Pfam" id="PF03952">
    <property type="entry name" value="Enolase_N"/>
    <property type="match status" value="1"/>
</dbReference>
<dbReference type="PIRSF" id="PIRSF001400">
    <property type="entry name" value="Enolase"/>
    <property type="match status" value="1"/>
</dbReference>
<dbReference type="PRINTS" id="PR00148">
    <property type="entry name" value="ENOLASE"/>
</dbReference>
<dbReference type="SFLD" id="SFLDF00002">
    <property type="entry name" value="enolase"/>
    <property type="match status" value="1"/>
</dbReference>
<dbReference type="SFLD" id="SFLDG00178">
    <property type="entry name" value="enolase"/>
    <property type="match status" value="1"/>
</dbReference>
<dbReference type="SMART" id="SM01192">
    <property type="entry name" value="Enolase_C"/>
    <property type="match status" value="1"/>
</dbReference>
<dbReference type="SMART" id="SM01193">
    <property type="entry name" value="Enolase_N"/>
    <property type="match status" value="1"/>
</dbReference>
<dbReference type="SUPFAM" id="SSF51604">
    <property type="entry name" value="Enolase C-terminal domain-like"/>
    <property type="match status" value="1"/>
</dbReference>
<dbReference type="SUPFAM" id="SSF54826">
    <property type="entry name" value="Enolase N-terminal domain-like"/>
    <property type="match status" value="1"/>
</dbReference>
<dbReference type="PROSITE" id="PS00164">
    <property type="entry name" value="ENOLASE"/>
    <property type="match status" value="1"/>
</dbReference>
<comment type="function">
    <text evidence="1">Catalyzes the reversible conversion of 2-phosphoglycerate (2-PG) into phosphoenolpyruvate (PEP). It is essential for the degradation of carbohydrates via glycolysis.</text>
</comment>
<comment type="catalytic activity">
    <reaction evidence="1">
        <text>(2R)-2-phosphoglycerate = phosphoenolpyruvate + H2O</text>
        <dbReference type="Rhea" id="RHEA:10164"/>
        <dbReference type="ChEBI" id="CHEBI:15377"/>
        <dbReference type="ChEBI" id="CHEBI:58289"/>
        <dbReference type="ChEBI" id="CHEBI:58702"/>
        <dbReference type="EC" id="4.2.1.11"/>
    </reaction>
</comment>
<comment type="cofactor">
    <cofactor evidence="1">
        <name>Mg(2+)</name>
        <dbReference type="ChEBI" id="CHEBI:18420"/>
    </cofactor>
    <text evidence="1">Binds a second Mg(2+) ion via substrate during catalysis.</text>
</comment>
<comment type="pathway">
    <text evidence="1">Carbohydrate degradation; glycolysis; pyruvate from D-glyceraldehyde 3-phosphate: step 4/5.</text>
</comment>
<comment type="subunit">
    <text evidence="1">Component of the RNA degradosome, a multiprotein complex involved in RNA processing and mRNA degradation.</text>
</comment>
<comment type="subcellular location">
    <subcellularLocation>
        <location evidence="1">Cytoplasm</location>
    </subcellularLocation>
    <subcellularLocation>
        <location evidence="1">Secreted</location>
    </subcellularLocation>
    <subcellularLocation>
        <location evidence="1">Cell surface</location>
    </subcellularLocation>
    <text evidence="1">Fractions of enolase are present in both the cytoplasm and on the cell surface.</text>
</comment>
<comment type="similarity">
    <text evidence="1">Belongs to the enolase family.</text>
</comment>
<proteinExistence type="inferred from homology"/>
<evidence type="ECO:0000255" key="1">
    <source>
        <dbReference type="HAMAP-Rule" id="MF_00318"/>
    </source>
</evidence>
<accession>Q1Q9K6</accession>
<sequence>MYAEETNNVTAIKDIRAREILDSRGNPTIEADVILADGTIGRAAAPSGASTGSREALELRDGDQSRYMGKGVKKAVANVNSQIRSALMDKDVTAQQAIDDAMIALDGTENKDNLGANAILAVSLAVAKAAAKSQSLPLHQYIADLRNQTSLTMPVPMMNIINGGEHADNTVDIQEFMIEPVGFSSFSEALRAGTEIFHSLKSVLKSQGLNTAVGDEGGFAPNLRSNEEAITVIMQAIEQVGYTAGKDIHLALDCAATEFYKDGKYVLAGEGNKSFDSQGFSDYLVGLARQYPIISIEDGLDESDWDGWKYLTEQIGDKVQLVGDDLFVTNPAILQEGIDKKIANAILIKFNQIGTLSETLDAIYLAKKNGYATVISHRSGETEDSTIADLAVGTAAGQIKTGSLCRSDRVAKYNQLLRIEQQVRASYRGREEFIGLRG</sequence>
<feature type="chain" id="PRO_0000267082" description="Enolase">
    <location>
        <begin position="1"/>
        <end position="438"/>
    </location>
</feature>
<feature type="active site" description="Proton donor" evidence="1">
    <location>
        <position position="216"/>
    </location>
</feature>
<feature type="active site" description="Proton acceptor" evidence="1">
    <location>
        <position position="349"/>
    </location>
</feature>
<feature type="binding site" evidence="1">
    <location>
        <position position="174"/>
    </location>
    <ligand>
        <name>(2R)-2-phosphoglycerate</name>
        <dbReference type="ChEBI" id="CHEBI:58289"/>
    </ligand>
</feature>
<feature type="binding site" evidence="1">
    <location>
        <position position="253"/>
    </location>
    <ligand>
        <name>Mg(2+)</name>
        <dbReference type="ChEBI" id="CHEBI:18420"/>
    </ligand>
</feature>
<feature type="binding site" evidence="1">
    <location>
        <position position="297"/>
    </location>
    <ligand>
        <name>Mg(2+)</name>
        <dbReference type="ChEBI" id="CHEBI:18420"/>
    </ligand>
</feature>
<feature type="binding site" evidence="1">
    <location>
        <position position="324"/>
    </location>
    <ligand>
        <name>Mg(2+)</name>
        <dbReference type="ChEBI" id="CHEBI:18420"/>
    </ligand>
</feature>
<feature type="binding site" evidence="1">
    <location>
        <position position="349"/>
    </location>
    <ligand>
        <name>(2R)-2-phosphoglycerate</name>
        <dbReference type="ChEBI" id="CHEBI:58289"/>
    </ligand>
</feature>
<feature type="binding site" evidence="1">
    <location>
        <position position="378"/>
    </location>
    <ligand>
        <name>(2R)-2-phosphoglycerate</name>
        <dbReference type="ChEBI" id="CHEBI:58289"/>
    </ligand>
</feature>
<feature type="binding site" evidence="1">
    <location>
        <position position="379"/>
    </location>
    <ligand>
        <name>(2R)-2-phosphoglycerate</name>
        <dbReference type="ChEBI" id="CHEBI:58289"/>
    </ligand>
</feature>
<feature type="binding site" evidence="1">
    <location>
        <position position="400"/>
    </location>
    <ligand>
        <name>(2R)-2-phosphoglycerate</name>
        <dbReference type="ChEBI" id="CHEBI:58289"/>
    </ligand>
</feature>
<keyword id="KW-0963">Cytoplasm</keyword>
<keyword id="KW-0324">Glycolysis</keyword>
<keyword id="KW-0456">Lyase</keyword>
<keyword id="KW-0460">Magnesium</keyword>
<keyword id="KW-0479">Metal-binding</keyword>
<keyword id="KW-0964">Secreted</keyword>
<protein>
    <recommendedName>
        <fullName evidence="1">Enolase</fullName>
        <ecNumber evidence="1">4.2.1.11</ecNumber>
    </recommendedName>
    <alternativeName>
        <fullName evidence="1">2-phospho-D-glycerate hydro-lyase</fullName>
    </alternativeName>
    <alternativeName>
        <fullName evidence="1">2-phosphoglycerate dehydratase</fullName>
    </alternativeName>
</protein>
<name>ENO_PSYCK</name>
<organism>
    <name type="scientific">Psychrobacter cryohalolentis (strain ATCC BAA-1226 / DSM 17306 / VKM B-2378 / K5)</name>
    <dbReference type="NCBI Taxonomy" id="335284"/>
    <lineage>
        <taxon>Bacteria</taxon>
        <taxon>Pseudomonadati</taxon>
        <taxon>Pseudomonadota</taxon>
        <taxon>Gammaproteobacteria</taxon>
        <taxon>Moraxellales</taxon>
        <taxon>Moraxellaceae</taxon>
        <taxon>Psychrobacter</taxon>
    </lineage>
</organism>
<reference key="1">
    <citation type="submission" date="2006-03" db="EMBL/GenBank/DDBJ databases">
        <title>Complete sequence of chromosome of Psychrobacter cryohalolentis K5.</title>
        <authorList>
            <consortium name="US DOE Joint Genome Institute"/>
            <person name="Copeland A."/>
            <person name="Lucas S."/>
            <person name="Lapidus A."/>
            <person name="Barry K."/>
            <person name="Detter J.C."/>
            <person name="Glavina T."/>
            <person name="Hammon N."/>
            <person name="Israni S."/>
            <person name="Dalin E."/>
            <person name="Tice H."/>
            <person name="Pitluck S."/>
            <person name="Brettin T."/>
            <person name="Bruce D."/>
            <person name="Han C."/>
            <person name="Tapia R."/>
            <person name="Sims D.R."/>
            <person name="Gilna P."/>
            <person name="Schmutz J."/>
            <person name="Larimer F."/>
            <person name="Land M."/>
            <person name="Hauser L."/>
            <person name="Kyrpides N."/>
            <person name="Kim E."/>
            <person name="Richardson P."/>
        </authorList>
    </citation>
    <scope>NUCLEOTIDE SEQUENCE [LARGE SCALE GENOMIC DNA]</scope>
    <source>
        <strain>ATCC BAA-1226 / DSM 17306 / VKM B-2378 / K5</strain>
    </source>
</reference>
<gene>
    <name evidence="1" type="primary">eno</name>
    <name type="ordered locus">Pcryo_1870</name>
</gene>